<keyword id="KW-0408">Iron</keyword>
<keyword id="KW-1185">Reference proteome</keyword>
<organism>
    <name type="scientific">Chromobacterium violaceum (strain ATCC 12472 / DSM 30191 / JCM 1249 / CCUG 213 / NBRC 12614 / NCIMB 9131 / NCTC 9757 / MK)</name>
    <dbReference type="NCBI Taxonomy" id="243365"/>
    <lineage>
        <taxon>Bacteria</taxon>
        <taxon>Pseudomonadati</taxon>
        <taxon>Pseudomonadota</taxon>
        <taxon>Betaproteobacteria</taxon>
        <taxon>Neisseriales</taxon>
        <taxon>Chromobacteriaceae</taxon>
        <taxon>Chromobacterium</taxon>
    </lineage>
</organism>
<accession>Q7NSR4</accession>
<gene>
    <name type="ordered locus">CV_3356</name>
</gene>
<evidence type="ECO:0000255" key="1">
    <source>
        <dbReference type="HAMAP-Rule" id="MF_00686"/>
    </source>
</evidence>
<evidence type="ECO:0000305" key="2"/>
<sequence length="90" mass="10095">MSRTVNCIKLGREAEGLDFPPLPGELGKRVYESVSKEAWQGWLRYQTMLINENRLSLADARARQYLASQLDAYFFGQGADAPAGYTPPQN</sequence>
<proteinExistence type="inferred from homology"/>
<comment type="function">
    <text evidence="1">Could be a mediator in iron transactions between iron acquisition and iron-requiring processes, such as synthesis and/or repair of Fe-S clusters in biosynthetic enzymes.</text>
</comment>
<comment type="similarity">
    <text evidence="1">Belongs to the Fe(2+)-trafficking protein family.</text>
</comment>
<comment type="sequence caution" evidence="2">
    <conflict type="erroneous initiation">
        <sequence resource="EMBL-CDS" id="AAQ61020"/>
    </conflict>
</comment>
<protein>
    <recommendedName>
        <fullName evidence="1">Probable Fe(2+)-trafficking protein</fullName>
    </recommendedName>
</protein>
<feature type="chain" id="PRO_0000214476" description="Probable Fe(2+)-trafficking protein">
    <location>
        <begin position="1"/>
        <end position="90"/>
    </location>
</feature>
<dbReference type="EMBL" id="AE016825">
    <property type="protein sequence ID" value="AAQ61020.1"/>
    <property type="status" value="ALT_INIT"/>
    <property type="molecule type" value="Genomic_DNA"/>
</dbReference>
<dbReference type="RefSeq" id="WP_021475089.1">
    <property type="nucleotide sequence ID" value="NC_005085.1"/>
</dbReference>
<dbReference type="SMR" id="Q7NSR4"/>
<dbReference type="STRING" id="243365.CV_3356"/>
<dbReference type="KEGG" id="cvi:CV_3356"/>
<dbReference type="eggNOG" id="COG2924">
    <property type="taxonomic scope" value="Bacteria"/>
</dbReference>
<dbReference type="HOGENOM" id="CLU_170994_0_0_4"/>
<dbReference type="OrthoDB" id="9804318at2"/>
<dbReference type="Proteomes" id="UP000001424">
    <property type="component" value="Chromosome"/>
</dbReference>
<dbReference type="GO" id="GO:0005829">
    <property type="term" value="C:cytosol"/>
    <property type="evidence" value="ECO:0007669"/>
    <property type="project" value="TreeGrafter"/>
</dbReference>
<dbReference type="GO" id="GO:0005506">
    <property type="term" value="F:iron ion binding"/>
    <property type="evidence" value="ECO:0007669"/>
    <property type="project" value="UniProtKB-UniRule"/>
</dbReference>
<dbReference type="GO" id="GO:0034599">
    <property type="term" value="P:cellular response to oxidative stress"/>
    <property type="evidence" value="ECO:0007669"/>
    <property type="project" value="TreeGrafter"/>
</dbReference>
<dbReference type="FunFam" id="1.10.3880.10:FF:000001">
    <property type="entry name" value="Probable Fe(2+)-trafficking protein"/>
    <property type="match status" value="1"/>
</dbReference>
<dbReference type="Gene3D" id="1.10.3880.10">
    <property type="entry name" value="Fe(II) trafficking protein YggX"/>
    <property type="match status" value="1"/>
</dbReference>
<dbReference type="HAMAP" id="MF_00686">
    <property type="entry name" value="Fe_traffic_YggX"/>
    <property type="match status" value="1"/>
</dbReference>
<dbReference type="InterPro" id="IPR007457">
    <property type="entry name" value="Fe_traffick_prot_YggX"/>
</dbReference>
<dbReference type="InterPro" id="IPR036766">
    <property type="entry name" value="Fe_traffick_prot_YggX_sf"/>
</dbReference>
<dbReference type="NCBIfam" id="NF003817">
    <property type="entry name" value="PRK05408.1"/>
    <property type="match status" value="1"/>
</dbReference>
<dbReference type="PANTHER" id="PTHR36965">
    <property type="entry name" value="FE(2+)-TRAFFICKING PROTEIN-RELATED"/>
    <property type="match status" value="1"/>
</dbReference>
<dbReference type="PANTHER" id="PTHR36965:SF1">
    <property type="entry name" value="FE(2+)-TRAFFICKING PROTEIN-RELATED"/>
    <property type="match status" value="1"/>
</dbReference>
<dbReference type="Pfam" id="PF04362">
    <property type="entry name" value="Iron_traffic"/>
    <property type="match status" value="1"/>
</dbReference>
<dbReference type="PIRSF" id="PIRSF029827">
    <property type="entry name" value="Fe_traffic_YggX"/>
    <property type="match status" value="1"/>
</dbReference>
<dbReference type="SUPFAM" id="SSF111148">
    <property type="entry name" value="YggX-like"/>
    <property type="match status" value="1"/>
</dbReference>
<name>FETP_CHRVO</name>
<reference key="1">
    <citation type="journal article" date="2003" name="Proc. Natl. Acad. Sci. U.S.A.">
        <title>The complete genome sequence of Chromobacterium violaceum reveals remarkable and exploitable bacterial adaptability.</title>
        <authorList>
            <person name="Vasconcelos A.T.R."/>
            <person name="de Almeida D.F."/>
            <person name="Hungria M."/>
            <person name="Guimaraes C.T."/>
            <person name="Antonio R.V."/>
            <person name="Almeida F.C."/>
            <person name="de Almeida L.G.P."/>
            <person name="de Almeida R."/>
            <person name="Alves-Gomes J.A."/>
            <person name="Andrade E.M."/>
            <person name="Araripe J."/>
            <person name="de Araujo M.F.F."/>
            <person name="Astolfi-Filho S."/>
            <person name="Azevedo V."/>
            <person name="Baptista A.J."/>
            <person name="Bataus L.A.M."/>
            <person name="Batista J.S."/>
            <person name="Belo A."/>
            <person name="van den Berg C."/>
            <person name="Bogo M."/>
            <person name="Bonatto S."/>
            <person name="Bordignon J."/>
            <person name="Brigido M.M."/>
            <person name="Brito C.A."/>
            <person name="Brocchi M."/>
            <person name="Burity H.A."/>
            <person name="Camargo A.A."/>
            <person name="Cardoso D.D.P."/>
            <person name="Carneiro N.P."/>
            <person name="Carraro D.M."/>
            <person name="Carvalho C.M.B."/>
            <person name="Cascardo J.C.M."/>
            <person name="Cavada B.S."/>
            <person name="Chueire L.M.O."/>
            <person name="Creczynski-Pasa T.B."/>
            <person name="Cunha-Junior N.C."/>
            <person name="Fagundes N."/>
            <person name="Falcao C.L."/>
            <person name="Fantinatti F."/>
            <person name="Farias I.P."/>
            <person name="Felipe M.S.S."/>
            <person name="Ferrari L.P."/>
            <person name="Ferro J.A."/>
            <person name="Ferro M.I.T."/>
            <person name="Franco G.R."/>
            <person name="Freitas N.S.A."/>
            <person name="Furlan L.R."/>
            <person name="Gazzinelli R.T."/>
            <person name="Gomes E.A."/>
            <person name="Goncalves P.R."/>
            <person name="Grangeiro T.B."/>
            <person name="Grattapaglia D."/>
            <person name="Grisard E.C."/>
            <person name="Hanna E.S."/>
            <person name="Jardim S.N."/>
            <person name="Laurino J."/>
            <person name="Leoi L.C.T."/>
            <person name="Lima L.F.A."/>
            <person name="Loureiro M.F."/>
            <person name="Lyra M.C.C.P."/>
            <person name="Madeira H.M.F."/>
            <person name="Manfio G.P."/>
            <person name="Maranhao A.Q."/>
            <person name="Martins W.S."/>
            <person name="di Mauro S.M.Z."/>
            <person name="de Medeiros S.R.B."/>
            <person name="Meissner R.V."/>
            <person name="Moreira M.A.M."/>
            <person name="Nascimento F.F."/>
            <person name="Nicolas M.F."/>
            <person name="Oliveira J.G."/>
            <person name="Oliveira S.C."/>
            <person name="Paixao R.F.C."/>
            <person name="Parente J.A."/>
            <person name="Pedrosa F.O."/>
            <person name="Pena S.D.J."/>
            <person name="Pereira J.O."/>
            <person name="Pereira M."/>
            <person name="Pinto L.S.R.C."/>
            <person name="Pinto L.S."/>
            <person name="Porto J.I.R."/>
            <person name="Potrich D.P."/>
            <person name="Ramalho-Neto C.E."/>
            <person name="Reis A.M.M."/>
            <person name="Rigo L.U."/>
            <person name="Rondinelli E."/>
            <person name="Santos E.B.P."/>
            <person name="Santos F.R."/>
            <person name="Schneider M.P.C."/>
            <person name="Seuanez H.N."/>
            <person name="Silva A.M.R."/>
            <person name="da Silva A.L.C."/>
            <person name="Silva D.W."/>
            <person name="Silva R."/>
            <person name="Simoes I.C."/>
            <person name="Simon D."/>
            <person name="Soares C.M.A."/>
            <person name="Soares R.B.A."/>
            <person name="Souza E.M."/>
            <person name="Souza K.R.L."/>
            <person name="Souza R.C."/>
            <person name="Steffens M.B.R."/>
            <person name="Steindel M."/>
            <person name="Teixeira S.R."/>
            <person name="Urmenyi T."/>
            <person name="Vettore A."/>
            <person name="Wassem R."/>
            <person name="Zaha A."/>
            <person name="Simpson A.J.G."/>
        </authorList>
    </citation>
    <scope>NUCLEOTIDE SEQUENCE [LARGE SCALE GENOMIC DNA]</scope>
    <source>
        <strain>ATCC 12472 / DSM 30191 / JCM 1249 / CCUG 213 / NBRC 12614 / NCIMB 9131 / NCTC 9757 / MK</strain>
    </source>
</reference>